<protein>
    <recommendedName>
        <fullName>Lipoprotein NlpI</fullName>
    </recommendedName>
</protein>
<dbReference type="EMBL" id="CU928163">
    <property type="protein sequence ID" value="CAR14799.1"/>
    <property type="molecule type" value="Genomic_DNA"/>
</dbReference>
<dbReference type="RefSeq" id="WP_000802087.1">
    <property type="nucleotide sequence ID" value="NC_011751.1"/>
</dbReference>
<dbReference type="RefSeq" id="YP_002414304.1">
    <property type="nucleotide sequence ID" value="NC_011751.1"/>
</dbReference>
<dbReference type="SMR" id="B7NDE9"/>
<dbReference type="STRING" id="585056.ECUMN_3645"/>
<dbReference type="KEGG" id="eum:ECUMN_3645"/>
<dbReference type="PATRIC" id="fig|585056.7.peg.3825"/>
<dbReference type="HOGENOM" id="CLU_071600_0_0_6"/>
<dbReference type="Proteomes" id="UP000007097">
    <property type="component" value="Chromosome"/>
</dbReference>
<dbReference type="GO" id="GO:0005886">
    <property type="term" value="C:plasma membrane"/>
    <property type="evidence" value="ECO:0007669"/>
    <property type="project" value="UniProtKB-SubCell"/>
</dbReference>
<dbReference type="GO" id="GO:0051301">
    <property type="term" value="P:cell division"/>
    <property type="evidence" value="ECO:0007669"/>
    <property type="project" value="UniProtKB-KW"/>
</dbReference>
<dbReference type="FunFam" id="1.25.40.10:FF:000021">
    <property type="entry name" value="Lipoprotein NlpI"/>
    <property type="match status" value="1"/>
</dbReference>
<dbReference type="Gene3D" id="1.25.40.10">
    <property type="entry name" value="Tetratricopeptide repeat domain"/>
    <property type="match status" value="1"/>
</dbReference>
<dbReference type="InterPro" id="IPR023605">
    <property type="entry name" value="Lipoprotein_NlpI"/>
</dbReference>
<dbReference type="InterPro" id="IPR011990">
    <property type="entry name" value="TPR-like_helical_dom_sf"/>
</dbReference>
<dbReference type="InterPro" id="IPR019734">
    <property type="entry name" value="TPR_rpt"/>
</dbReference>
<dbReference type="InterPro" id="IPR050498">
    <property type="entry name" value="Ycf3"/>
</dbReference>
<dbReference type="NCBIfam" id="NF008391">
    <property type="entry name" value="PRK11189.1"/>
    <property type="match status" value="1"/>
</dbReference>
<dbReference type="PANTHER" id="PTHR44858">
    <property type="entry name" value="TETRATRICOPEPTIDE REPEAT PROTEIN 6"/>
    <property type="match status" value="1"/>
</dbReference>
<dbReference type="PANTHER" id="PTHR44858:SF1">
    <property type="entry name" value="UDP-N-ACETYLGLUCOSAMINE--PEPTIDE N-ACETYLGLUCOSAMINYLTRANSFERASE SPINDLY-RELATED"/>
    <property type="match status" value="1"/>
</dbReference>
<dbReference type="Pfam" id="PF13432">
    <property type="entry name" value="TPR_16"/>
    <property type="match status" value="1"/>
</dbReference>
<dbReference type="PIRSF" id="PIRSF004654">
    <property type="entry name" value="NlpI"/>
    <property type="match status" value="1"/>
</dbReference>
<dbReference type="SMART" id="SM00028">
    <property type="entry name" value="TPR"/>
    <property type="match status" value="3"/>
</dbReference>
<dbReference type="SUPFAM" id="SSF48452">
    <property type="entry name" value="TPR-like"/>
    <property type="match status" value="1"/>
</dbReference>
<dbReference type="PROSITE" id="PS51257">
    <property type="entry name" value="PROKAR_LIPOPROTEIN"/>
    <property type="match status" value="1"/>
</dbReference>
<dbReference type="PROSITE" id="PS50005">
    <property type="entry name" value="TPR"/>
    <property type="match status" value="3"/>
</dbReference>
<dbReference type="PROSITE" id="PS50293">
    <property type="entry name" value="TPR_REGION"/>
    <property type="match status" value="2"/>
</dbReference>
<organism>
    <name type="scientific">Escherichia coli O17:K52:H18 (strain UMN026 / ExPEC)</name>
    <dbReference type="NCBI Taxonomy" id="585056"/>
    <lineage>
        <taxon>Bacteria</taxon>
        <taxon>Pseudomonadati</taxon>
        <taxon>Pseudomonadota</taxon>
        <taxon>Gammaproteobacteria</taxon>
        <taxon>Enterobacterales</taxon>
        <taxon>Enterobacteriaceae</taxon>
        <taxon>Escherichia</taxon>
    </lineage>
</organism>
<gene>
    <name type="primary">nlpI</name>
    <name type="ordered locus">ECUMN_3645</name>
</gene>
<sequence length="294" mass="33649">MKPFLRWCFVATALTLAGCSNTSWRKSEVLAVPLQPTLQQEVILARMEQILASRALTDDERAQLLYERGVLYDSLGLRALARNDFSQALAIRPDMPEVFNYLGIYLTQAGNFDAAYEAFDSVLELDPTYNYAHLNRGIALYYGGRDKLAQDDLLAFYQDDPNDPFRSLWLYLAEQKLDEKQAKEVLRQHFEKSDKEQWGWNIVEFYLGNISEQTLMERLKADATDNTSLAEHLSETNFYLGKYYLSLGDLDSATALFKLAVANNVHNFVEHRYALLELSLLGQDQDDLAESDQQ</sequence>
<reference key="1">
    <citation type="journal article" date="2009" name="PLoS Genet.">
        <title>Organised genome dynamics in the Escherichia coli species results in highly diverse adaptive paths.</title>
        <authorList>
            <person name="Touchon M."/>
            <person name="Hoede C."/>
            <person name="Tenaillon O."/>
            <person name="Barbe V."/>
            <person name="Baeriswyl S."/>
            <person name="Bidet P."/>
            <person name="Bingen E."/>
            <person name="Bonacorsi S."/>
            <person name="Bouchier C."/>
            <person name="Bouvet O."/>
            <person name="Calteau A."/>
            <person name="Chiapello H."/>
            <person name="Clermont O."/>
            <person name="Cruveiller S."/>
            <person name="Danchin A."/>
            <person name="Diard M."/>
            <person name="Dossat C."/>
            <person name="Karoui M.E."/>
            <person name="Frapy E."/>
            <person name="Garry L."/>
            <person name="Ghigo J.M."/>
            <person name="Gilles A.M."/>
            <person name="Johnson J."/>
            <person name="Le Bouguenec C."/>
            <person name="Lescat M."/>
            <person name="Mangenot S."/>
            <person name="Martinez-Jehanne V."/>
            <person name="Matic I."/>
            <person name="Nassif X."/>
            <person name="Oztas S."/>
            <person name="Petit M.A."/>
            <person name="Pichon C."/>
            <person name="Rouy Z."/>
            <person name="Ruf C.S."/>
            <person name="Schneider D."/>
            <person name="Tourret J."/>
            <person name="Vacherie B."/>
            <person name="Vallenet D."/>
            <person name="Medigue C."/>
            <person name="Rocha E.P.C."/>
            <person name="Denamur E."/>
        </authorList>
    </citation>
    <scope>NUCLEOTIDE SEQUENCE [LARGE SCALE GENOMIC DNA]</scope>
    <source>
        <strain>UMN026 / ExPEC</strain>
    </source>
</reference>
<name>NLPI_ECOLU</name>
<proteinExistence type="inferred from homology"/>
<evidence type="ECO:0000250" key="1"/>
<evidence type="ECO:0000255" key="2">
    <source>
        <dbReference type="PROSITE-ProRule" id="PRU00303"/>
    </source>
</evidence>
<comment type="function">
    <text evidence="1">May be involved in cell division. May play a role in bacterial septation or regulation of cell wall degradation during cell division (By similarity).</text>
</comment>
<comment type="subunit">
    <text evidence="1">Homodimer.</text>
</comment>
<comment type="subcellular location">
    <subcellularLocation>
        <location evidence="2">Cell membrane</location>
        <topology evidence="2">Lipid-anchor</topology>
    </subcellularLocation>
</comment>
<keyword id="KW-0131">Cell cycle</keyword>
<keyword id="KW-0132">Cell division</keyword>
<keyword id="KW-1003">Cell membrane</keyword>
<keyword id="KW-0449">Lipoprotein</keyword>
<keyword id="KW-0472">Membrane</keyword>
<keyword id="KW-0564">Palmitate</keyword>
<keyword id="KW-0677">Repeat</keyword>
<keyword id="KW-0732">Signal</keyword>
<keyword id="KW-0802">TPR repeat</keyword>
<accession>B7NDE9</accession>
<feature type="signal peptide" evidence="2">
    <location>
        <begin position="1"/>
        <end position="18"/>
    </location>
</feature>
<feature type="chain" id="PRO_0000413475" description="Lipoprotein NlpI">
    <location>
        <begin position="19"/>
        <end position="294"/>
    </location>
</feature>
<feature type="repeat" description="TPR 1">
    <location>
        <begin position="62"/>
        <end position="95"/>
    </location>
</feature>
<feature type="repeat" description="TPR 2">
    <location>
        <begin position="96"/>
        <end position="129"/>
    </location>
</feature>
<feature type="repeat" description="TPR 3">
    <location>
        <begin position="234"/>
        <end position="267"/>
    </location>
</feature>
<feature type="lipid moiety-binding region" description="N-palmitoyl cysteine" evidence="2">
    <location>
        <position position="19"/>
    </location>
</feature>
<feature type="lipid moiety-binding region" description="S-diacylglycerol cysteine" evidence="2">
    <location>
        <position position="19"/>
    </location>
</feature>